<sequence length="201" mass="23410">MGVKKLSRKDYLNILESILFIDFLKGLSVTLKNLLRRPITTEYPKEKLTPPKRFRGAHGHYVWDGTEPDSLKAIEKFMSYEKAKSRCVACYMCQTACPMPTLFRIEAVQLPNGKKKVVRFDMNLLNCLFCGLCVDACPVGCLTMTDIFELANYSRRNEVLRMEDLEKFAIDFKQRRGNEPDRIWPNDEEREKLWGKIEWSG</sequence>
<feature type="chain" id="PRO_0000250875" description="NADH-quinone oxidoreductase subunit I">
    <location>
        <begin position="1"/>
        <end position="201"/>
    </location>
</feature>
<feature type="domain" description="4Fe-4S ferredoxin-type 1" evidence="1">
    <location>
        <begin position="78"/>
        <end position="107"/>
    </location>
</feature>
<feature type="domain" description="4Fe-4S ferredoxin-type 2" evidence="1">
    <location>
        <begin position="116"/>
        <end position="147"/>
    </location>
</feature>
<feature type="binding site" evidence="1">
    <location>
        <position position="87"/>
    </location>
    <ligand>
        <name>[4Fe-4S] cluster</name>
        <dbReference type="ChEBI" id="CHEBI:49883"/>
        <label>1</label>
    </ligand>
</feature>
<feature type="binding site" evidence="1">
    <location>
        <position position="90"/>
    </location>
    <ligand>
        <name>[4Fe-4S] cluster</name>
        <dbReference type="ChEBI" id="CHEBI:49883"/>
        <label>1</label>
    </ligand>
</feature>
<feature type="binding site" evidence="1">
    <location>
        <position position="93"/>
    </location>
    <ligand>
        <name>[4Fe-4S] cluster</name>
        <dbReference type="ChEBI" id="CHEBI:49883"/>
        <label>1</label>
    </ligand>
</feature>
<feature type="binding site" evidence="1">
    <location>
        <position position="97"/>
    </location>
    <ligand>
        <name>[4Fe-4S] cluster</name>
        <dbReference type="ChEBI" id="CHEBI:49883"/>
        <label>2</label>
    </ligand>
</feature>
<feature type="binding site" evidence="1">
    <location>
        <position position="127"/>
    </location>
    <ligand>
        <name>[4Fe-4S] cluster</name>
        <dbReference type="ChEBI" id="CHEBI:49883"/>
        <label>2</label>
    </ligand>
</feature>
<feature type="binding site" evidence="1">
    <location>
        <position position="130"/>
    </location>
    <ligand>
        <name>[4Fe-4S] cluster</name>
        <dbReference type="ChEBI" id="CHEBI:49883"/>
        <label>2</label>
    </ligand>
</feature>
<feature type="binding site" evidence="1">
    <location>
        <position position="133"/>
    </location>
    <ligand>
        <name>[4Fe-4S] cluster</name>
        <dbReference type="ChEBI" id="CHEBI:49883"/>
        <label>2</label>
    </ligand>
</feature>
<feature type="binding site" evidence="1">
    <location>
        <position position="137"/>
    </location>
    <ligand>
        <name>[4Fe-4S] cluster</name>
        <dbReference type="ChEBI" id="CHEBI:49883"/>
        <label>1</label>
    </ligand>
</feature>
<feature type="helix" evidence="2">
    <location>
        <begin position="16"/>
        <end position="18"/>
    </location>
</feature>
<feature type="helix" evidence="2">
    <location>
        <begin position="20"/>
        <end position="24"/>
    </location>
</feature>
<feature type="helix" evidence="2">
    <location>
        <begin position="27"/>
        <end position="30"/>
    </location>
</feature>
<feature type="helix" evidence="2">
    <location>
        <begin position="32"/>
        <end position="34"/>
    </location>
</feature>
<feature type="strand" evidence="2">
    <location>
        <begin position="43"/>
        <end position="46"/>
    </location>
</feature>
<feature type="strand" evidence="2">
    <location>
        <begin position="57"/>
        <end position="60"/>
    </location>
</feature>
<feature type="helix" evidence="2">
    <location>
        <begin position="69"/>
        <end position="74"/>
    </location>
</feature>
<feature type="helix" evidence="2">
    <location>
        <begin position="75"/>
        <end position="77"/>
    </location>
</feature>
<feature type="helix" evidence="2">
    <location>
        <begin position="92"/>
        <end position="96"/>
    </location>
</feature>
<feature type="helix" evidence="2">
    <location>
        <begin position="100"/>
        <end position="102"/>
    </location>
</feature>
<feature type="strand" evidence="2">
    <location>
        <begin position="103"/>
        <end position="109"/>
    </location>
</feature>
<feature type="strand" evidence="2">
    <location>
        <begin position="115"/>
        <end position="123"/>
    </location>
</feature>
<feature type="helix" evidence="2">
    <location>
        <begin position="124"/>
        <end position="126"/>
    </location>
</feature>
<feature type="helix" evidence="2">
    <location>
        <begin position="132"/>
        <end position="136"/>
    </location>
</feature>
<feature type="strand" evidence="2">
    <location>
        <begin position="138"/>
        <end position="140"/>
    </location>
</feature>
<feature type="strand" evidence="2">
    <location>
        <begin position="142"/>
        <end position="144"/>
    </location>
</feature>
<feature type="strand" evidence="2">
    <location>
        <begin position="152"/>
        <end position="154"/>
    </location>
</feature>
<feature type="helix" evidence="2">
    <location>
        <begin position="155"/>
        <end position="158"/>
    </location>
</feature>
<feature type="helix" evidence="2">
    <location>
        <begin position="162"/>
        <end position="176"/>
    </location>
</feature>
<feature type="helix" evidence="2">
    <location>
        <begin position="188"/>
        <end position="191"/>
    </location>
</feature>
<proteinExistence type="evidence at protein level"/>
<protein>
    <recommendedName>
        <fullName evidence="1">NADH-quinone oxidoreductase subunit I</fullName>
        <ecNumber evidence="1">7.1.1.-</ecNumber>
    </recommendedName>
    <alternativeName>
        <fullName evidence="1">NADH dehydrogenase I subunit I</fullName>
    </alternativeName>
    <alternativeName>
        <fullName evidence="1">NDH-1 subunit I</fullName>
    </alternativeName>
</protein>
<reference key="1">
    <citation type="journal article" date="1998" name="Nature">
        <title>The complete genome of the hyperthermophilic bacterium Aquifex aeolicus.</title>
        <authorList>
            <person name="Deckert G."/>
            <person name="Warren P.V."/>
            <person name="Gaasterland T."/>
            <person name="Young W.G."/>
            <person name="Lenox A.L."/>
            <person name="Graham D.E."/>
            <person name="Overbeek R."/>
            <person name="Snead M.A."/>
            <person name="Keller M."/>
            <person name="Aujay M."/>
            <person name="Huber R."/>
            <person name="Feldman R.A."/>
            <person name="Short J.M."/>
            <person name="Olsen G.J."/>
            <person name="Swanson R.V."/>
        </authorList>
    </citation>
    <scope>NUCLEOTIDE SEQUENCE [LARGE SCALE GENOMIC DNA]</scope>
    <source>
        <strain>VF5</strain>
    </source>
</reference>
<evidence type="ECO:0000255" key="1">
    <source>
        <dbReference type="HAMAP-Rule" id="MF_01351"/>
    </source>
</evidence>
<evidence type="ECO:0007829" key="2">
    <source>
        <dbReference type="PDB" id="7Q5Y"/>
    </source>
</evidence>
<organism>
    <name type="scientific">Aquifex aeolicus (strain VF5)</name>
    <dbReference type="NCBI Taxonomy" id="224324"/>
    <lineage>
        <taxon>Bacteria</taxon>
        <taxon>Pseudomonadati</taxon>
        <taxon>Aquificota</taxon>
        <taxon>Aquificia</taxon>
        <taxon>Aquificales</taxon>
        <taxon>Aquificaceae</taxon>
        <taxon>Aquifex</taxon>
    </lineage>
</organism>
<keyword id="KW-0002">3D-structure</keyword>
<keyword id="KW-0004">4Fe-4S</keyword>
<keyword id="KW-0997">Cell inner membrane</keyword>
<keyword id="KW-1003">Cell membrane</keyword>
<keyword id="KW-0408">Iron</keyword>
<keyword id="KW-0411">Iron-sulfur</keyword>
<keyword id="KW-0472">Membrane</keyword>
<keyword id="KW-0479">Metal-binding</keyword>
<keyword id="KW-0520">NAD</keyword>
<keyword id="KW-0874">Quinone</keyword>
<keyword id="KW-1185">Reference proteome</keyword>
<keyword id="KW-0677">Repeat</keyword>
<keyword id="KW-1278">Translocase</keyword>
<keyword id="KW-0830">Ubiquinone</keyword>
<accession>O67337</accession>
<gene>
    <name evidence="1" type="primary">nuoI</name>
    <name type="ordered locus">aq_1317</name>
</gene>
<name>NUOI1_AQUAE</name>
<dbReference type="EC" id="7.1.1.-" evidence="1"/>
<dbReference type="EMBL" id="AE000657">
    <property type="protein sequence ID" value="AAC07300.1"/>
    <property type="molecule type" value="Genomic_DNA"/>
</dbReference>
<dbReference type="PIR" id="F70413">
    <property type="entry name" value="F70413"/>
</dbReference>
<dbReference type="RefSeq" id="NP_213901.1">
    <property type="nucleotide sequence ID" value="NC_000918.1"/>
</dbReference>
<dbReference type="RefSeq" id="WP_010880839.1">
    <property type="nucleotide sequence ID" value="NC_000918.1"/>
</dbReference>
<dbReference type="PDB" id="7Q5Y">
    <property type="method" value="X-ray"/>
    <property type="resolution" value="2.70 A"/>
    <property type="chains" value="D/J/P/V=1-201"/>
</dbReference>
<dbReference type="PDBsum" id="7Q5Y"/>
<dbReference type="SMR" id="O67337"/>
<dbReference type="FunCoup" id="O67337">
    <property type="interactions" value="325"/>
</dbReference>
<dbReference type="STRING" id="224324.aq_1317"/>
<dbReference type="EnsemblBacteria" id="AAC07300">
    <property type="protein sequence ID" value="AAC07300"/>
    <property type="gene ID" value="aq_1317"/>
</dbReference>
<dbReference type="KEGG" id="aae:aq_1317"/>
<dbReference type="PATRIC" id="fig|224324.8.peg.1025"/>
<dbReference type="eggNOG" id="COG1143">
    <property type="taxonomic scope" value="Bacteria"/>
</dbReference>
<dbReference type="HOGENOM" id="CLU_067218_4_3_0"/>
<dbReference type="InParanoid" id="O67337"/>
<dbReference type="OrthoDB" id="9798098at2"/>
<dbReference type="Proteomes" id="UP000000798">
    <property type="component" value="Chromosome"/>
</dbReference>
<dbReference type="GO" id="GO:0005886">
    <property type="term" value="C:plasma membrane"/>
    <property type="evidence" value="ECO:0007669"/>
    <property type="project" value="UniProtKB-SubCell"/>
</dbReference>
<dbReference type="GO" id="GO:0051539">
    <property type="term" value="F:4 iron, 4 sulfur cluster binding"/>
    <property type="evidence" value="ECO:0007669"/>
    <property type="project" value="UniProtKB-KW"/>
</dbReference>
<dbReference type="GO" id="GO:0005506">
    <property type="term" value="F:iron ion binding"/>
    <property type="evidence" value="ECO:0007669"/>
    <property type="project" value="UniProtKB-UniRule"/>
</dbReference>
<dbReference type="GO" id="GO:0050136">
    <property type="term" value="F:NADH:ubiquinone reductase (non-electrogenic) activity"/>
    <property type="evidence" value="ECO:0007669"/>
    <property type="project" value="UniProtKB-UniRule"/>
</dbReference>
<dbReference type="GO" id="GO:0048038">
    <property type="term" value="F:quinone binding"/>
    <property type="evidence" value="ECO:0007669"/>
    <property type="project" value="UniProtKB-KW"/>
</dbReference>
<dbReference type="FunFam" id="3.30.70.3270:FF:000018">
    <property type="entry name" value="NADH-quinone oxidoreductase subunit I 2"/>
    <property type="match status" value="1"/>
</dbReference>
<dbReference type="Gene3D" id="3.30.70.3270">
    <property type="match status" value="1"/>
</dbReference>
<dbReference type="HAMAP" id="MF_01351">
    <property type="entry name" value="NDH1_NuoI"/>
    <property type="match status" value="1"/>
</dbReference>
<dbReference type="InterPro" id="IPR017896">
    <property type="entry name" value="4Fe4S_Fe-S-bd"/>
</dbReference>
<dbReference type="InterPro" id="IPR017900">
    <property type="entry name" value="4Fe4S_Fe_S_CS"/>
</dbReference>
<dbReference type="InterPro" id="IPR010226">
    <property type="entry name" value="NADH_quinone_OxRdtase_chainI"/>
</dbReference>
<dbReference type="PANTHER" id="PTHR10849">
    <property type="entry name" value="NADH DEHYDROGENASE UBIQUINONE IRON-SULFUR PROTEIN 8, MITOCHONDRIAL"/>
    <property type="match status" value="1"/>
</dbReference>
<dbReference type="PANTHER" id="PTHR10849:SF24">
    <property type="entry name" value="NADH-QUINONE OXIDOREDUCTASE SUBUNIT I 2"/>
    <property type="match status" value="1"/>
</dbReference>
<dbReference type="Pfam" id="PF12838">
    <property type="entry name" value="Fer4_7"/>
    <property type="match status" value="1"/>
</dbReference>
<dbReference type="SUPFAM" id="SSF46548">
    <property type="entry name" value="alpha-helical ferredoxin"/>
    <property type="match status" value="1"/>
</dbReference>
<dbReference type="PROSITE" id="PS00198">
    <property type="entry name" value="4FE4S_FER_1"/>
    <property type="match status" value="2"/>
</dbReference>
<dbReference type="PROSITE" id="PS51379">
    <property type="entry name" value="4FE4S_FER_2"/>
    <property type="match status" value="2"/>
</dbReference>
<comment type="function">
    <text evidence="1">NDH-1 shuttles electrons from NADH, via FMN and iron-sulfur (Fe-S) centers, to quinones in the respiratory chain. The immediate electron acceptor for the enzyme in this species is believed to be ubiquinone. Couples the redox reaction to proton translocation (for every two electrons transferred, four hydrogen ions are translocated across the cytoplasmic membrane), and thus conserves the redox energy in a proton gradient.</text>
</comment>
<comment type="catalytic activity">
    <reaction evidence="1">
        <text>a quinone + NADH + 5 H(+)(in) = a quinol + NAD(+) + 4 H(+)(out)</text>
        <dbReference type="Rhea" id="RHEA:57888"/>
        <dbReference type="ChEBI" id="CHEBI:15378"/>
        <dbReference type="ChEBI" id="CHEBI:24646"/>
        <dbReference type="ChEBI" id="CHEBI:57540"/>
        <dbReference type="ChEBI" id="CHEBI:57945"/>
        <dbReference type="ChEBI" id="CHEBI:132124"/>
    </reaction>
</comment>
<comment type="cofactor">
    <cofactor evidence="1">
        <name>[4Fe-4S] cluster</name>
        <dbReference type="ChEBI" id="CHEBI:49883"/>
    </cofactor>
    <text evidence="1">Binds 2 [4Fe-4S] clusters per subunit.</text>
</comment>
<comment type="subunit">
    <text evidence="1">NDH-1 is composed of 14 different subunits. Subunits NuoA, H, J, K, L, M, N constitute the membrane sector of the complex.</text>
</comment>
<comment type="subcellular location">
    <subcellularLocation>
        <location evidence="1">Cell inner membrane</location>
        <topology evidence="1">Peripheral membrane protein</topology>
    </subcellularLocation>
</comment>
<comment type="similarity">
    <text evidence="1">Belongs to the complex I 23 kDa subunit family.</text>
</comment>